<reference key="1">
    <citation type="journal article" date="2009" name="PLoS ONE">
        <title>Complete genome sequence of Francisella tularensis subspecies holarctica FTNF002-00.</title>
        <authorList>
            <person name="Barabote R.D."/>
            <person name="Xie G."/>
            <person name="Brettin T.S."/>
            <person name="Hinrichs S.H."/>
            <person name="Fey P.D."/>
            <person name="Jay J.J."/>
            <person name="Engle J.L."/>
            <person name="Godbole S.D."/>
            <person name="Noronha J.M."/>
            <person name="Scheuermann R.H."/>
            <person name="Zhou L.W."/>
            <person name="Lion C."/>
            <person name="Dempsey M.P."/>
        </authorList>
    </citation>
    <scope>NUCLEOTIDE SEQUENCE [LARGE SCALE GENOMIC DNA]</scope>
    <source>
        <strain>FTNF002-00 / FTA</strain>
    </source>
</reference>
<organism>
    <name type="scientific">Francisella tularensis subsp. holarctica (strain FTNF002-00 / FTA)</name>
    <dbReference type="NCBI Taxonomy" id="458234"/>
    <lineage>
        <taxon>Bacteria</taxon>
        <taxon>Pseudomonadati</taxon>
        <taxon>Pseudomonadota</taxon>
        <taxon>Gammaproteobacteria</taxon>
        <taxon>Thiotrichales</taxon>
        <taxon>Francisellaceae</taxon>
        <taxon>Francisella</taxon>
    </lineage>
</organism>
<dbReference type="EC" id="2.1.1.242" evidence="1"/>
<dbReference type="EMBL" id="CP000803">
    <property type="protein sequence ID" value="ABU60784.1"/>
    <property type="molecule type" value="Genomic_DNA"/>
</dbReference>
<dbReference type="RefSeq" id="WP_003014447.1">
    <property type="nucleotide sequence ID" value="NC_009749.1"/>
</dbReference>
<dbReference type="SMR" id="A7N9Y1"/>
<dbReference type="KEGG" id="fta:FTA_0307"/>
<dbReference type="HOGENOM" id="CLU_076324_1_0_6"/>
<dbReference type="GO" id="GO:0005737">
    <property type="term" value="C:cytoplasm"/>
    <property type="evidence" value="ECO:0007669"/>
    <property type="project" value="UniProtKB-SubCell"/>
</dbReference>
<dbReference type="GO" id="GO:0008990">
    <property type="term" value="F:rRNA (guanine-N2-)-methyltransferase activity"/>
    <property type="evidence" value="ECO:0007669"/>
    <property type="project" value="UniProtKB-UniRule"/>
</dbReference>
<dbReference type="CDD" id="cd02440">
    <property type="entry name" value="AdoMet_MTases"/>
    <property type="match status" value="1"/>
</dbReference>
<dbReference type="Gene3D" id="3.40.50.150">
    <property type="entry name" value="Vaccinia Virus protein VP39"/>
    <property type="match status" value="1"/>
</dbReference>
<dbReference type="HAMAP" id="MF_01523">
    <property type="entry name" value="16SrRNA_methyltr_J"/>
    <property type="match status" value="1"/>
</dbReference>
<dbReference type="InterPro" id="IPR007536">
    <property type="entry name" value="16SrRNA_methylTrfase_J"/>
</dbReference>
<dbReference type="InterPro" id="IPR029063">
    <property type="entry name" value="SAM-dependent_MTases_sf"/>
</dbReference>
<dbReference type="PANTHER" id="PTHR36112">
    <property type="entry name" value="RIBOSOMAL RNA SMALL SUBUNIT METHYLTRANSFERASE J"/>
    <property type="match status" value="1"/>
</dbReference>
<dbReference type="PANTHER" id="PTHR36112:SF1">
    <property type="entry name" value="RIBOSOMAL RNA SMALL SUBUNIT METHYLTRANSFERASE J"/>
    <property type="match status" value="1"/>
</dbReference>
<dbReference type="Pfam" id="PF04445">
    <property type="entry name" value="SAM_MT"/>
    <property type="match status" value="1"/>
</dbReference>
<dbReference type="SUPFAM" id="SSF53335">
    <property type="entry name" value="S-adenosyl-L-methionine-dependent methyltransferases"/>
    <property type="match status" value="1"/>
</dbReference>
<sequence>MQINISNLDVKNHLDKFIEDRLEYEFCKQDKYLYLENDNLKLHYNNKELFIDFNDSEILNRINPKTKKCSVVQAIEGRSKAKLTILDTTAGLGRDTFTLAARGHTLLTLEKDSYLYLLLKDALQRAQQINYLKEIANRITLINIDSNEYILTTDKSFDCVYVDPMFPPRKKSAKVKQGMQILHQVGFNDEVSNSNLLDNIIQTQISPKAVVKRPINAEFLSNKKPSSQLKGKTNRFDIYSL</sequence>
<evidence type="ECO:0000255" key="1">
    <source>
        <dbReference type="HAMAP-Rule" id="MF_01523"/>
    </source>
</evidence>
<accession>A7N9Y1</accession>
<comment type="function">
    <text evidence="1">Specifically methylates the guanosine in position 1516 of 16S rRNA.</text>
</comment>
<comment type="catalytic activity">
    <reaction evidence="1">
        <text>guanosine(1516) in 16S rRNA + S-adenosyl-L-methionine = N(2)-methylguanosine(1516) in 16S rRNA + S-adenosyl-L-homocysteine + H(+)</text>
        <dbReference type="Rhea" id="RHEA:43220"/>
        <dbReference type="Rhea" id="RHEA-COMP:10412"/>
        <dbReference type="Rhea" id="RHEA-COMP:10413"/>
        <dbReference type="ChEBI" id="CHEBI:15378"/>
        <dbReference type="ChEBI" id="CHEBI:57856"/>
        <dbReference type="ChEBI" id="CHEBI:59789"/>
        <dbReference type="ChEBI" id="CHEBI:74269"/>
        <dbReference type="ChEBI" id="CHEBI:74481"/>
        <dbReference type="EC" id="2.1.1.242"/>
    </reaction>
</comment>
<comment type="subcellular location">
    <subcellularLocation>
        <location evidence="1">Cytoplasm</location>
    </subcellularLocation>
</comment>
<comment type="similarity">
    <text evidence="1">Belongs to the methyltransferase superfamily. RsmJ family.</text>
</comment>
<gene>
    <name evidence="1" type="primary">rsmJ</name>
    <name type="ordered locus">FTA_0307</name>
</gene>
<protein>
    <recommendedName>
        <fullName evidence="1">Ribosomal RNA small subunit methyltransferase J</fullName>
        <ecNumber evidence="1">2.1.1.242</ecNumber>
    </recommendedName>
    <alternativeName>
        <fullName evidence="1">16S rRNA m2G1516 methyltransferase</fullName>
    </alternativeName>
    <alternativeName>
        <fullName evidence="1">rRNA (guanine-N(2)-)-methyltransferase</fullName>
    </alternativeName>
</protein>
<proteinExistence type="inferred from homology"/>
<keyword id="KW-0963">Cytoplasm</keyword>
<keyword id="KW-0489">Methyltransferase</keyword>
<keyword id="KW-0698">rRNA processing</keyword>
<keyword id="KW-0949">S-adenosyl-L-methionine</keyword>
<keyword id="KW-0808">Transferase</keyword>
<name>RSMJ_FRATF</name>
<feature type="chain" id="PRO_1000068652" description="Ribosomal RNA small subunit methyltransferase J">
    <location>
        <begin position="1"/>
        <end position="241"/>
    </location>
</feature>
<feature type="binding site" evidence="1">
    <location>
        <begin position="94"/>
        <end position="95"/>
    </location>
    <ligand>
        <name>S-adenosyl-L-methionine</name>
        <dbReference type="ChEBI" id="CHEBI:59789"/>
    </ligand>
</feature>
<feature type="binding site" evidence="1">
    <location>
        <position position="163"/>
    </location>
    <ligand>
        <name>S-adenosyl-L-methionine</name>
        <dbReference type="ChEBI" id="CHEBI:59789"/>
    </ligand>
</feature>